<feature type="chain" id="PRO_0000056747" description="Signal-induced proliferation-associated 1-like protein 1">
    <location>
        <begin position="1"/>
        <end position="1782"/>
    </location>
</feature>
<feature type="domain" description="Rap-GAP" evidence="6">
    <location>
        <begin position="599"/>
        <end position="816"/>
    </location>
</feature>
<feature type="domain" description="PDZ" evidence="5">
    <location>
        <begin position="953"/>
        <end position="1031"/>
    </location>
</feature>
<feature type="region of interest" description="Disordered" evidence="7">
    <location>
        <begin position="1"/>
        <end position="28"/>
    </location>
</feature>
<feature type="region of interest" description="Disordered" evidence="7">
    <location>
        <begin position="47"/>
        <end position="125"/>
    </location>
</feature>
<feature type="region of interest" description="Disordered" evidence="7">
    <location>
        <begin position="140"/>
        <end position="171"/>
    </location>
</feature>
<feature type="region of interest" description="Disordered" evidence="7">
    <location>
        <begin position="277"/>
        <end position="297"/>
    </location>
</feature>
<feature type="region of interest" description="Disordered" evidence="7">
    <location>
        <begin position="1069"/>
        <end position="1128"/>
    </location>
</feature>
<feature type="region of interest" description="Disordered" evidence="7">
    <location>
        <begin position="1144"/>
        <end position="1213"/>
    </location>
</feature>
<feature type="region of interest" description="Disordered" evidence="7">
    <location>
        <begin position="1247"/>
        <end position="1285"/>
    </location>
</feature>
<feature type="region of interest" description="Disordered" evidence="7">
    <location>
        <begin position="1307"/>
        <end position="1342"/>
    </location>
</feature>
<feature type="region of interest" description="Disordered" evidence="7">
    <location>
        <begin position="1358"/>
        <end position="1454"/>
    </location>
</feature>
<feature type="region of interest" description="Disordered" evidence="7">
    <location>
        <begin position="1625"/>
        <end position="1647"/>
    </location>
</feature>
<feature type="coiled-coil region" evidence="4">
    <location>
        <begin position="1713"/>
        <end position="1773"/>
    </location>
</feature>
<feature type="compositionally biased region" description="Basic and acidic residues" evidence="7">
    <location>
        <begin position="84"/>
        <end position="94"/>
    </location>
</feature>
<feature type="compositionally biased region" description="Low complexity" evidence="7">
    <location>
        <begin position="95"/>
        <end position="125"/>
    </location>
</feature>
<feature type="compositionally biased region" description="Polar residues" evidence="7">
    <location>
        <begin position="1080"/>
        <end position="1093"/>
    </location>
</feature>
<feature type="compositionally biased region" description="Low complexity" evidence="7">
    <location>
        <begin position="1149"/>
        <end position="1159"/>
    </location>
</feature>
<feature type="compositionally biased region" description="Polar residues" evidence="7">
    <location>
        <begin position="1186"/>
        <end position="1205"/>
    </location>
</feature>
<feature type="compositionally biased region" description="Low complexity" evidence="7">
    <location>
        <begin position="1261"/>
        <end position="1276"/>
    </location>
</feature>
<feature type="compositionally biased region" description="Low complexity" evidence="7">
    <location>
        <begin position="1315"/>
        <end position="1328"/>
    </location>
</feature>
<feature type="compositionally biased region" description="Basic and acidic residues" evidence="7">
    <location>
        <begin position="1358"/>
        <end position="1368"/>
    </location>
</feature>
<feature type="compositionally biased region" description="Polar residues" evidence="7">
    <location>
        <begin position="1378"/>
        <end position="1410"/>
    </location>
</feature>
<feature type="compositionally biased region" description="Low complexity" evidence="7">
    <location>
        <begin position="1432"/>
        <end position="1447"/>
    </location>
</feature>
<feature type="modified residue" description="Phosphoserine" evidence="3">
    <location>
        <position position="162"/>
    </location>
</feature>
<feature type="modified residue" description="Phosphoserine" evidence="3">
    <location>
        <position position="187"/>
    </location>
</feature>
<feature type="modified residue" description="Phosphoserine" evidence="3">
    <location>
        <position position="193"/>
    </location>
</feature>
<feature type="modified residue" description="Phosphoserine" evidence="3">
    <location>
        <position position="208"/>
    </location>
</feature>
<feature type="modified residue" description="Phosphoserine" evidence="14">
    <location>
        <position position="255"/>
    </location>
</feature>
<feature type="modified residue" description="Phosphoserine" evidence="14">
    <location>
        <position position="288"/>
    </location>
</feature>
<feature type="modified residue" description="Phosphoserine" evidence="3">
    <location>
        <position position="1078"/>
    </location>
</feature>
<feature type="modified residue" description="Phosphoserine" evidence="3">
    <location>
        <position position="1087"/>
    </location>
</feature>
<feature type="modified residue" description="Phosphoserine" evidence="3">
    <location>
        <position position="1116"/>
    </location>
</feature>
<feature type="modified residue" description="Phosphoserine" evidence="14">
    <location>
        <position position="1127"/>
    </location>
</feature>
<feature type="modified residue" description="Phosphoserine" evidence="3">
    <location>
        <position position="1149"/>
    </location>
</feature>
<feature type="modified residue" description="Phosphoserine" evidence="3">
    <location>
        <position position="1170"/>
    </location>
</feature>
<feature type="modified residue" description="Phosphoserine" evidence="3">
    <location>
        <position position="1181"/>
    </location>
</feature>
<feature type="modified residue" description="Phosphoserine" evidence="3">
    <location>
        <position position="1234"/>
    </location>
</feature>
<feature type="modified residue" description="Phosphoserine" evidence="3">
    <location>
        <position position="1249"/>
    </location>
</feature>
<feature type="modified residue" description="Phosphoserine; by PLK2" evidence="2">
    <location>
        <position position="1305"/>
    </location>
</feature>
<feature type="modified residue" description="Phosphothreonine; by PLK2" evidence="2">
    <location>
        <position position="1309"/>
    </location>
</feature>
<feature type="modified residue" description="Phosphoserine; by CDK5" evidence="2">
    <location>
        <position position="1328"/>
    </location>
</feature>
<feature type="modified residue" description="Phosphoserine" evidence="3">
    <location>
        <position position="1345"/>
    </location>
</feature>
<feature type="modified residue" description="Phosphoserine" evidence="3">
    <location>
        <position position="1369"/>
    </location>
</feature>
<feature type="modified residue" description="Phosphoserine" evidence="3">
    <location>
        <position position="1370"/>
    </location>
</feature>
<feature type="modified residue" description="Phosphoserine" evidence="3">
    <location>
        <position position="1391"/>
    </location>
</feature>
<feature type="modified residue" description="Phosphoserine" evidence="14">
    <location>
        <position position="1410"/>
    </location>
</feature>
<feature type="modified residue" description="Phosphoserine" evidence="14">
    <location>
        <position position="1412"/>
    </location>
</feature>
<feature type="modified residue" description="Phosphoserine" evidence="3">
    <location>
        <position position="1507"/>
    </location>
</feature>
<feature type="modified residue" description="Phosphoserine" evidence="12 13">
    <location>
        <position position="1528"/>
    </location>
</feature>
<feature type="modified residue" description="Phosphothreonine" evidence="3">
    <location>
        <position position="1530"/>
    </location>
</feature>
<feature type="modified residue" description="Phosphoserine" evidence="3">
    <location>
        <position position="1533"/>
    </location>
</feature>
<feature type="modified residue" description="Phosphoserine" evidence="3">
    <location>
        <position position="1544"/>
    </location>
</feature>
<feature type="modified residue" description="Phosphoserine" evidence="11 14">
    <location>
        <position position="1547"/>
    </location>
</feature>
<feature type="modified residue" description="Phosphoserine" evidence="14">
    <location>
        <position position="1564"/>
    </location>
</feature>
<feature type="modified residue" description="Phosphoserine" evidence="3">
    <location>
        <position position="1567"/>
    </location>
</feature>
<feature type="modified residue" description="Asymmetric dimethylarginine" evidence="15">
    <location>
        <position position="1580"/>
    </location>
</feature>
<feature type="modified residue" description="Phosphoserine" evidence="14">
    <location>
        <position position="1582"/>
    </location>
</feature>
<feature type="modified residue" description="Phosphoserine" evidence="14">
    <location>
        <position position="1624"/>
    </location>
</feature>
<feature type="modified residue" description="Phosphoserine" evidence="14">
    <location>
        <position position="1626"/>
    </location>
</feature>
<feature type="modified residue" description="Phosphoserine" evidence="14">
    <location>
        <position position="1629"/>
    </location>
</feature>
<feature type="modified residue" description="Phosphoserine" evidence="14">
    <location>
        <position position="1687"/>
    </location>
</feature>
<feature type="modified residue" description="Phosphoserine" evidence="14">
    <location>
        <position position="1690"/>
    </location>
</feature>
<feature type="modified residue" description="Phosphoserine" evidence="14">
    <location>
        <position position="1707"/>
    </location>
</feature>
<feature type="modified residue" description="Phosphoserine" evidence="14">
    <location>
        <position position="1708"/>
    </location>
</feature>
<feature type="modified residue" description="Phosphoserine" evidence="14">
    <location>
        <position position="1712"/>
    </location>
</feature>
<feature type="splice variant" id="VSP_010918" description="In isoform 2." evidence="9">
    <original>EKEDKAQLQAEVEHLR</original>
    <variation>VNALRKRRQGPAAGGS</variation>
    <location>
        <begin position="1736"/>
        <end position="1751"/>
    </location>
</feature>
<feature type="splice variant" id="VSP_010919" description="In isoform 2." evidence="9">
    <location>
        <begin position="1752"/>
        <end position="1782"/>
    </location>
</feature>
<feature type="sequence conflict" description="In Ref. 1; BAC26660." evidence="10" ref="1">
    <original>S</original>
    <variation>N</variation>
    <location>
        <position position="855"/>
    </location>
</feature>
<feature type="sequence conflict" description="In Ref. 1; BAC65566." evidence="10" ref="1">
    <original>W</original>
    <variation>C</variation>
    <location>
        <position position="1204"/>
    </location>
</feature>
<reference key="1">
    <citation type="journal article" date="2005" name="Science">
        <title>The transcriptional landscape of the mammalian genome.</title>
        <authorList>
            <person name="Carninci P."/>
            <person name="Kasukawa T."/>
            <person name="Katayama S."/>
            <person name="Gough J."/>
            <person name="Frith M.C."/>
            <person name="Maeda N."/>
            <person name="Oyama R."/>
            <person name="Ravasi T."/>
            <person name="Lenhard B."/>
            <person name="Wells C."/>
            <person name="Kodzius R."/>
            <person name="Shimokawa K."/>
            <person name="Bajic V.B."/>
            <person name="Brenner S.E."/>
            <person name="Batalov S."/>
            <person name="Forrest A.R."/>
            <person name="Zavolan M."/>
            <person name="Davis M.J."/>
            <person name="Wilming L.G."/>
            <person name="Aidinis V."/>
            <person name="Allen J.E."/>
            <person name="Ambesi-Impiombato A."/>
            <person name="Apweiler R."/>
            <person name="Aturaliya R.N."/>
            <person name="Bailey T.L."/>
            <person name="Bansal M."/>
            <person name="Baxter L."/>
            <person name="Beisel K.W."/>
            <person name="Bersano T."/>
            <person name="Bono H."/>
            <person name="Chalk A.M."/>
            <person name="Chiu K.P."/>
            <person name="Choudhary V."/>
            <person name="Christoffels A."/>
            <person name="Clutterbuck D.R."/>
            <person name="Crowe M.L."/>
            <person name="Dalla E."/>
            <person name="Dalrymple B.P."/>
            <person name="de Bono B."/>
            <person name="Della Gatta G."/>
            <person name="di Bernardo D."/>
            <person name="Down T."/>
            <person name="Engstrom P."/>
            <person name="Fagiolini M."/>
            <person name="Faulkner G."/>
            <person name="Fletcher C.F."/>
            <person name="Fukushima T."/>
            <person name="Furuno M."/>
            <person name="Futaki S."/>
            <person name="Gariboldi M."/>
            <person name="Georgii-Hemming P."/>
            <person name="Gingeras T.R."/>
            <person name="Gojobori T."/>
            <person name="Green R.E."/>
            <person name="Gustincich S."/>
            <person name="Harbers M."/>
            <person name="Hayashi Y."/>
            <person name="Hensch T.K."/>
            <person name="Hirokawa N."/>
            <person name="Hill D."/>
            <person name="Huminiecki L."/>
            <person name="Iacono M."/>
            <person name="Ikeo K."/>
            <person name="Iwama A."/>
            <person name="Ishikawa T."/>
            <person name="Jakt M."/>
            <person name="Kanapin A."/>
            <person name="Katoh M."/>
            <person name="Kawasawa Y."/>
            <person name="Kelso J."/>
            <person name="Kitamura H."/>
            <person name="Kitano H."/>
            <person name="Kollias G."/>
            <person name="Krishnan S.P."/>
            <person name="Kruger A."/>
            <person name="Kummerfeld S.K."/>
            <person name="Kurochkin I.V."/>
            <person name="Lareau L.F."/>
            <person name="Lazarevic D."/>
            <person name="Lipovich L."/>
            <person name="Liu J."/>
            <person name="Liuni S."/>
            <person name="McWilliam S."/>
            <person name="Madan Babu M."/>
            <person name="Madera M."/>
            <person name="Marchionni L."/>
            <person name="Matsuda H."/>
            <person name="Matsuzawa S."/>
            <person name="Miki H."/>
            <person name="Mignone F."/>
            <person name="Miyake S."/>
            <person name="Morris K."/>
            <person name="Mottagui-Tabar S."/>
            <person name="Mulder N."/>
            <person name="Nakano N."/>
            <person name="Nakauchi H."/>
            <person name="Ng P."/>
            <person name="Nilsson R."/>
            <person name="Nishiguchi S."/>
            <person name="Nishikawa S."/>
            <person name="Nori F."/>
            <person name="Ohara O."/>
            <person name="Okazaki Y."/>
            <person name="Orlando V."/>
            <person name="Pang K.C."/>
            <person name="Pavan W.J."/>
            <person name="Pavesi G."/>
            <person name="Pesole G."/>
            <person name="Petrovsky N."/>
            <person name="Piazza S."/>
            <person name="Reed J."/>
            <person name="Reid J.F."/>
            <person name="Ring B.Z."/>
            <person name="Ringwald M."/>
            <person name="Rost B."/>
            <person name="Ruan Y."/>
            <person name="Salzberg S.L."/>
            <person name="Sandelin A."/>
            <person name="Schneider C."/>
            <person name="Schoenbach C."/>
            <person name="Sekiguchi K."/>
            <person name="Semple C.A."/>
            <person name="Seno S."/>
            <person name="Sessa L."/>
            <person name="Sheng Y."/>
            <person name="Shibata Y."/>
            <person name="Shimada H."/>
            <person name="Shimada K."/>
            <person name="Silva D."/>
            <person name="Sinclair B."/>
            <person name="Sperling S."/>
            <person name="Stupka E."/>
            <person name="Sugiura K."/>
            <person name="Sultana R."/>
            <person name="Takenaka Y."/>
            <person name="Taki K."/>
            <person name="Tammoja K."/>
            <person name="Tan S.L."/>
            <person name="Tang S."/>
            <person name="Taylor M.S."/>
            <person name="Tegner J."/>
            <person name="Teichmann S.A."/>
            <person name="Ueda H.R."/>
            <person name="van Nimwegen E."/>
            <person name="Verardo R."/>
            <person name="Wei C.L."/>
            <person name="Yagi K."/>
            <person name="Yamanishi H."/>
            <person name="Zabarovsky E."/>
            <person name="Zhu S."/>
            <person name="Zimmer A."/>
            <person name="Hide W."/>
            <person name="Bult C."/>
            <person name="Grimmond S.M."/>
            <person name="Teasdale R.D."/>
            <person name="Liu E.T."/>
            <person name="Brusic V."/>
            <person name="Quackenbush J."/>
            <person name="Wahlestedt C."/>
            <person name="Mattick J.S."/>
            <person name="Hume D.A."/>
            <person name="Kai C."/>
            <person name="Sasaki D."/>
            <person name="Tomaru Y."/>
            <person name="Fukuda S."/>
            <person name="Kanamori-Katayama M."/>
            <person name="Suzuki M."/>
            <person name="Aoki J."/>
            <person name="Arakawa T."/>
            <person name="Iida J."/>
            <person name="Imamura K."/>
            <person name="Itoh M."/>
            <person name="Kato T."/>
            <person name="Kawaji H."/>
            <person name="Kawagashira N."/>
            <person name="Kawashima T."/>
            <person name="Kojima M."/>
            <person name="Kondo S."/>
            <person name="Konno H."/>
            <person name="Nakano K."/>
            <person name="Ninomiya N."/>
            <person name="Nishio T."/>
            <person name="Okada M."/>
            <person name="Plessy C."/>
            <person name="Shibata K."/>
            <person name="Shiraki T."/>
            <person name="Suzuki S."/>
            <person name="Tagami M."/>
            <person name="Waki K."/>
            <person name="Watahiki A."/>
            <person name="Okamura-Oho Y."/>
            <person name="Suzuki H."/>
            <person name="Kawai J."/>
            <person name="Hayashizaki Y."/>
        </authorList>
    </citation>
    <scope>NUCLEOTIDE SEQUENCE [LARGE SCALE MRNA] (ISOFORM 1)</scope>
    <source>
        <strain>C57BL/6J</strain>
        <tissue>Olfactory bulb</tissue>
        <tissue>Testis</tissue>
    </source>
</reference>
<reference key="2">
    <citation type="journal article" date="2004" name="Genome Res.">
        <title>The status, quality, and expansion of the NIH full-length cDNA project: the Mammalian Gene Collection (MGC).</title>
        <authorList>
            <consortium name="The MGC Project Team"/>
        </authorList>
    </citation>
    <scope>NUCLEOTIDE SEQUENCE [LARGE SCALE MRNA] (ISOFORM 2)</scope>
    <source>
        <strain>C57BL/6J</strain>
        <tissue>Brain</tissue>
    </source>
</reference>
<reference key="3">
    <citation type="submission" date="2007-04" db="UniProtKB">
        <authorList>
            <person name="Lubec G."/>
            <person name="Kang S.U."/>
        </authorList>
    </citation>
    <scope>PROTEIN SEQUENCE OF 18-28; 1379-1408 AND 1468-1482</scope>
    <scope>IDENTIFICATION BY MASS SPECTROMETRY</scope>
    <source>
        <strain>C57BL/6J</strain>
        <tissue>Brain</tissue>
    </source>
</reference>
<reference key="4">
    <citation type="journal article" date="2003" name="DNA Res.">
        <title>Prediction of the coding sequences of mouse homologues of KIAA gene: II. The complete nucleotide sequences of 400 mouse KIAA-homologous cDNAs identified by screening of terminal sequences of cDNA clones randomly sampled from size-fractionated libraries.</title>
        <authorList>
            <person name="Okazaki N."/>
            <person name="Kikuno R."/>
            <person name="Ohara R."/>
            <person name="Inamoto S."/>
            <person name="Aizawa H."/>
            <person name="Yuasa S."/>
            <person name="Nakajima D."/>
            <person name="Nagase T."/>
            <person name="Ohara O."/>
            <person name="Koga H."/>
        </authorList>
    </citation>
    <scope>NUCLEOTIDE SEQUENCE [LARGE SCALE MRNA] OF 273-1782 (ISOFORM 1)</scope>
    <source>
        <tissue>Brain</tissue>
    </source>
</reference>
<reference key="5">
    <citation type="journal article" date="2006" name="Mol. Cell. Proteomics">
        <title>Comprehensive identification of phosphorylation sites in postsynaptic density preparations.</title>
        <authorList>
            <person name="Trinidad J.C."/>
            <person name="Specht C.G."/>
            <person name="Thalhammer A."/>
            <person name="Schoepfer R."/>
            <person name="Burlingame A.L."/>
        </authorList>
    </citation>
    <scope>IDENTIFICATION BY MASS SPECTROMETRY [LARGE SCALE ANALYSIS]</scope>
    <source>
        <tissue>Brain</tissue>
    </source>
</reference>
<reference key="6">
    <citation type="journal article" date="2007" name="J. Neurosci.">
        <title>The EphA4 receptor regulates neuronal morphology through SPAR-mediated inactivation of Rap GTPases.</title>
        <authorList>
            <person name="Richter M."/>
            <person name="Murai K.K."/>
            <person name="Bourgin C."/>
            <person name="Pak D.T."/>
            <person name="Pasquale E.B."/>
        </authorList>
    </citation>
    <scope>INTERACTION WITH EPHA4</scope>
</reference>
<reference key="7">
    <citation type="journal article" date="2007" name="Proc. Natl. Acad. Sci. U.S.A.">
        <title>Large-scale phosphorylation analysis of mouse liver.</title>
        <authorList>
            <person name="Villen J."/>
            <person name="Beausoleil S.A."/>
            <person name="Gerber S.A."/>
            <person name="Gygi S.P."/>
        </authorList>
    </citation>
    <scope>PHOSPHORYLATION [LARGE SCALE ANALYSIS] AT SER-1547</scope>
    <scope>IDENTIFICATION BY MASS SPECTROMETRY [LARGE SCALE ANALYSIS]</scope>
    <source>
        <tissue>Liver</tissue>
    </source>
</reference>
<reference key="8">
    <citation type="journal article" date="2009" name="Immunity">
        <title>The phagosomal proteome in interferon-gamma-activated macrophages.</title>
        <authorList>
            <person name="Trost M."/>
            <person name="English L."/>
            <person name="Lemieux S."/>
            <person name="Courcelles M."/>
            <person name="Desjardins M."/>
            <person name="Thibault P."/>
        </authorList>
    </citation>
    <scope>PHOSPHORYLATION [LARGE SCALE ANALYSIS] AT SER-1528</scope>
    <scope>IDENTIFICATION BY MASS SPECTROMETRY [LARGE SCALE ANALYSIS]</scope>
</reference>
<reference key="9">
    <citation type="journal article" date="2009" name="Mol. Cell. Proteomics">
        <title>Large scale localization of protein phosphorylation by use of electron capture dissociation mass spectrometry.</title>
        <authorList>
            <person name="Sweet S.M."/>
            <person name="Bailey C.M."/>
            <person name="Cunningham D.L."/>
            <person name="Heath J.K."/>
            <person name="Cooper H.J."/>
        </authorList>
    </citation>
    <scope>PHOSPHORYLATION [LARGE SCALE ANALYSIS] AT SER-1528</scope>
    <scope>IDENTIFICATION BY MASS SPECTROMETRY [LARGE SCALE ANALYSIS]</scope>
    <source>
        <tissue>Embryonic fibroblast</tissue>
    </source>
</reference>
<reference key="10">
    <citation type="journal article" date="2010" name="Cell">
        <title>A tissue-specific atlas of mouse protein phosphorylation and expression.</title>
        <authorList>
            <person name="Huttlin E.L."/>
            <person name="Jedrychowski M.P."/>
            <person name="Elias J.E."/>
            <person name="Goswami T."/>
            <person name="Rad R."/>
            <person name="Beausoleil S.A."/>
            <person name="Villen J."/>
            <person name="Haas W."/>
            <person name="Sowa M.E."/>
            <person name="Gygi S.P."/>
        </authorList>
    </citation>
    <scope>PHOSPHORYLATION [LARGE SCALE ANALYSIS] AT SER-255; SER-288; SER-1127; SER-1410; SER-1412; SER-1547; SER-1564; SER-1582; SER-1624; SER-1626; SER-1629; SER-1687; SER-1690; SER-1707; SER-1708 AND SER-1712</scope>
    <scope>IDENTIFICATION BY MASS SPECTROMETRY [LARGE SCALE ANALYSIS]</scope>
    <source>
        <tissue>Brain</tissue>
        <tissue>Brown adipose tissue</tissue>
        <tissue>Kidney</tissue>
        <tissue>Liver</tissue>
        <tissue>Lung</tissue>
        <tissue>Spleen</tissue>
        <tissue>Testis</tissue>
    </source>
</reference>
<reference key="11">
    <citation type="journal article" date="2014" name="Mol. Cell. Proteomics">
        <title>Immunoaffinity enrichment and mass spectrometry analysis of protein methylation.</title>
        <authorList>
            <person name="Guo A."/>
            <person name="Gu H."/>
            <person name="Zhou J."/>
            <person name="Mulhern D."/>
            <person name="Wang Y."/>
            <person name="Lee K.A."/>
            <person name="Yang V."/>
            <person name="Aguiar M."/>
            <person name="Kornhauser J."/>
            <person name="Jia X."/>
            <person name="Ren J."/>
            <person name="Beausoleil S.A."/>
            <person name="Silva J.C."/>
            <person name="Vemulapalli V."/>
            <person name="Bedford M.T."/>
            <person name="Comb M.J."/>
        </authorList>
    </citation>
    <scope>METHYLATION [LARGE SCALE ANALYSIS] AT ARG-1580</scope>
    <scope>IDENTIFICATION BY MASS SPECTROMETRY [LARGE SCALE ANALYSIS]</scope>
    <source>
        <tissue>Brain</tissue>
    </source>
</reference>
<evidence type="ECO:0000250" key="1"/>
<evidence type="ECO:0000250" key="2">
    <source>
        <dbReference type="UniProtKB" id="O35412"/>
    </source>
</evidence>
<evidence type="ECO:0000250" key="3">
    <source>
        <dbReference type="UniProtKB" id="O43166"/>
    </source>
</evidence>
<evidence type="ECO:0000255" key="4"/>
<evidence type="ECO:0000255" key="5">
    <source>
        <dbReference type="PROSITE-ProRule" id="PRU00143"/>
    </source>
</evidence>
<evidence type="ECO:0000255" key="6">
    <source>
        <dbReference type="PROSITE-ProRule" id="PRU00165"/>
    </source>
</evidence>
<evidence type="ECO:0000256" key="7">
    <source>
        <dbReference type="SAM" id="MobiDB-lite"/>
    </source>
</evidence>
<evidence type="ECO:0000269" key="8">
    <source>
    </source>
</evidence>
<evidence type="ECO:0000303" key="9">
    <source>
    </source>
</evidence>
<evidence type="ECO:0000305" key="10"/>
<evidence type="ECO:0007744" key="11">
    <source>
    </source>
</evidence>
<evidence type="ECO:0007744" key="12">
    <source>
    </source>
</evidence>
<evidence type="ECO:0007744" key="13">
    <source>
    </source>
</evidence>
<evidence type="ECO:0007744" key="14">
    <source>
    </source>
</evidence>
<evidence type="ECO:0007744" key="15">
    <source>
    </source>
</evidence>
<comment type="function">
    <text evidence="1">Stimulates the GTPase activity of RAP2A. Promotes reorganization of the actin cytoskeleton and recruits DLG4 to F-actin. Contributes to the regulation of dendritic spine morphogenesis (By similarity).</text>
</comment>
<comment type="subunit">
    <text evidence="1 8">Interacts with DLG4, PDLIM5, PDLIM7 and LZTS3. Interacts with the actin cytoskeleton (By similarity). Interacts (via PDZ domain) with EPHA4 (via PDZ motif); controls neuronal morphology through regulation of the RAP1 (RAP1A or RAP1B) and RAP2 (RAP2A, RAP2B or RAP2C) GTPases.</text>
</comment>
<comment type="subcellular location">
    <subcellularLocation>
        <location evidence="1">Cytoplasm</location>
        <location evidence="1">Cytoskeleton</location>
    </subcellularLocation>
    <subcellularLocation>
        <location evidence="1">Postsynaptic density</location>
    </subcellularLocation>
    <subcellularLocation>
        <location evidence="1">Synapse</location>
        <location evidence="1">Synaptosome</location>
    </subcellularLocation>
    <text evidence="1">Associated with the actin cytoskeleton. Detected at synapses and dendritic spines of cultured hippocampal neurons (By similarity).</text>
</comment>
<comment type="alternative products">
    <event type="alternative splicing"/>
    <isoform>
        <id>Q8C0T5-1</id>
        <name>1</name>
        <name>E6TP1 alpha</name>
        <sequence type="displayed"/>
    </isoform>
    <isoform>
        <id>Q8C0T5-2</id>
        <name>2</name>
        <sequence type="described" ref="VSP_010918 VSP_010919"/>
    </isoform>
</comment>
<comment type="PTM">
    <text evidence="1">Ubiquitinated and degraded by the SCF(BTRC) following phosphorylation by PLK2.</text>
</comment>
<comment type="PTM">
    <text evidence="1">Phosphorylated at Ser-1328 by CDK5, creating a docking site for the POLO box domains of PLK2. Subsequently, PLK2 binds and phosphorylates SIPA1L1, leading to ubiquitination and degradation by the proteasome (By similarity).</text>
</comment>
<accession>Q8C0T5</accession>
<accession>Q6PDI8</accession>
<accession>Q80U02</accession>
<accession>Q8C026</accession>
<name>SI1L1_MOUSE</name>
<sequence length="1782" mass="197031">MTSLKRSQTERPVTADRASVVSTDGAPKVHTDDFYMRRFRSQNGSLGSSVMAAVGPPRSEGPHHITSTPGVPKMGVRARIADWPPRKENVKESSRSSQEIETSSCLESLSSKGSPVSQGSSVSLNSNDSAMLKSIQNTLKNKTGPAESMDSRFLMPEAYPSSPRKALRRIRQRSNSDITISELDVDSFDECISPTYKSGPSLHREYGSTSSIDKQGTSGDSFFDLLKGYKDDRSDRGPTPTKLSDFLITGGGKGSGFSLDVIDGPISQRENLRLFKEREKPLKRRSKSETGDSSIFRKLRNAKGEELGKSSDLEDNRSEDSVRPWTCPKCFAHYDVQSILFDLNEAIMNRHNVIKRRNTTTGASAAAVASLVSGPLSHSASFSSPMGSTEDLNSKGSLGMDQGDDKSNELVMSCPYFRNEIGGEGERKISLSKSNSGSFSGCESTSFESALSSHCTNAGVAVLEVPKESLMLHLDRVKRYTVEHVDLGAYYYRKFFYQKEHWNYFGADENLGPVAVSIRREKPEDMKENGSPYNYRIIFRTSELMTLRGSVLEDAIPSTAKHSTARGLPLKEVLEHVIPELNVQCLRLAFNTPKVTEQLMKLDEQGLNYQQKVGIMYCKAGQSTEEEMYNNESAGPAFEEFLQLLGERVRLKGFEKYRAQLDTKTDSTGTHSLYTTYKDYEIMFHVSTMLPYTPNNKQQLLRKRHIGNDIVTIVFQEPGAQPFSPKNIRSHFQHVFVIVRAHNPCTESVCYSVAVTRSRDVPSFGPPIPKGVTFPKSNVFRDFLLAKVINAENAAHKSEKFRAMATRTRQEYLKDLAEKNVTNTPIDPSGKFPFISLASKKKEKSKPYPGAELSSMGAIVWAVRAKDYNKAMEFDCLLGISSEFIVLIEQETKSVAFNCSCRDVIGWTSSDTSLKIFYERGECVSVESFISGEDIKEIVRRLQFVSKGCESVEMTLRRNGLGQLGFHVNYEGIVADVEPYGYAWQAGLRQGSRLVEICKVAVATLSHEQMIDLLRTSVTVKVVIIPPHDDCTPRRSCSETYRMPVMEYQMNEGISYEFKFPFRNNNKWQRNASKGAHSPQVPSQLQSPMTSRLNAGKGDGKMPPPERAANIPRSISSDGRPLERRLSPGSDIYVTVSSMALARSQCRNSPSNLSSSSETGSGGGTYRQKSMPEGFGVSRRSPASIDRQNTQSDISGSGKSTPSWQRSEDSLADQMEPTCHLPAVSKVLPAFRESPSGRLMRQDPVVHLSPNKQGHSDSHYSSHSSSNTLSSNASSAHSDEKWYDGDRTESDLNSYNYLQGTSADSGIDTASYGPSHGSTASLGASTSSPRSGPGKEKVAPLWHSSSEVLSLADRTLETEGHGMDRKAESSLSLDIHSKSQGGSSPLSRENSTFSINDAASHTSTMSSRHSASPVVFSSARSSPKEELHPTASSQLAPSFSSSSSSSSGPRTFYPRQGATSKYLIGWKKPEGTINSVGFMDTRKRHQSDGNEIAHTRLRASTRDLQASPKPTSKSTIEEDLKKLIDLESPTPESQKNFKFHALSSPQSPFPTTPTSRRALHRTLSDESIYSSQREHFFTSRASLLDQALPNDVLFSSTYPSLPKSLPLRRPSYTLGMKSLHGEFSASDSSLTDIQETRRQPIPDPGLMPLPDAASDLDWSNLVDAAKAYEVQRASFFAASDENHRPLSAASNSDQLEEQALVQMKSYSSKDPSPTLASKVDQLEGMLKMLREDLKKEKEDKAQLQAEVEHLREDNLRLQEESQNASDKLKKFTEWVFNTIDMS</sequence>
<gene>
    <name type="primary">Sipa1l1</name>
    <name type="synonym">Kiaa0440</name>
</gene>
<protein>
    <recommendedName>
        <fullName>Signal-induced proliferation-associated 1-like protein 1</fullName>
        <shortName>SIPA1-like protein 1</shortName>
    </recommendedName>
</protein>
<organism>
    <name type="scientific">Mus musculus</name>
    <name type="common">Mouse</name>
    <dbReference type="NCBI Taxonomy" id="10090"/>
    <lineage>
        <taxon>Eukaryota</taxon>
        <taxon>Metazoa</taxon>
        <taxon>Chordata</taxon>
        <taxon>Craniata</taxon>
        <taxon>Vertebrata</taxon>
        <taxon>Euteleostomi</taxon>
        <taxon>Mammalia</taxon>
        <taxon>Eutheria</taxon>
        <taxon>Euarchontoglires</taxon>
        <taxon>Glires</taxon>
        <taxon>Rodentia</taxon>
        <taxon>Myomorpha</taxon>
        <taxon>Muroidea</taxon>
        <taxon>Muridae</taxon>
        <taxon>Murinae</taxon>
        <taxon>Mus</taxon>
        <taxon>Mus</taxon>
    </lineage>
</organism>
<dbReference type="EMBL" id="AK029889">
    <property type="protein sequence ID" value="BAC26660.1"/>
    <property type="molecule type" value="mRNA"/>
</dbReference>
<dbReference type="EMBL" id="AK032493">
    <property type="protein sequence ID" value="BAC27896.1"/>
    <property type="molecule type" value="mRNA"/>
</dbReference>
<dbReference type="EMBL" id="BC058681">
    <property type="protein sequence ID" value="AAH58681.1"/>
    <property type="molecule type" value="mRNA"/>
</dbReference>
<dbReference type="EMBL" id="AK122284">
    <property type="protein sequence ID" value="BAC65566.1"/>
    <property type="molecule type" value="mRNA"/>
</dbReference>
<dbReference type="CCDS" id="CCDS26026.1">
    <molecule id="Q8C0T5-1"/>
</dbReference>
<dbReference type="CCDS" id="CCDS49105.1">
    <molecule id="Q8C0T5-2"/>
</dbReference>
<dbReference type="RefSeq" id="NP_001161455.1">
    <molecule id="Q8C0T5-2"/>
    <property type="nucleotide sequence ID" value="NM_001167983.1"/>
</dbReference>
<dbReference type="RefSeq" id="NP_001394332.1">
    <molecule id="Q8C0T5-1"/>
    <property type="nucleotide sequence ID" value="NM_001407403.1"/>
</dbReference>
<dbReference type="RefSeq" id="NP_001394333.1">
    <molecule id="Q8C0T5-1"/>
    <property type="nucleotide sequence ID" value="NM_001407404.1"/>
</dbReference>
<dbReference type="RefSeq" id="NP_001394334.1">
    <molecule id="Q8C0T5-1"/>
    <property type="nucleotide sequence ID" value="NM_001407405.1"/>
</dbReference>
<dbReference type="RefSeq" id="NP_001394335.1">
    <molecule id="Q8C0T5-1"/>
    <property type="nucleotide sequence ID" value="NM_001407406.1"/>
</dbReference>
<dbReference type="RefSeq" id="NP_766167.2">
    <molecule id="Q8C0T5-1"/>
    <property type="nucleotide sequence ID" value="NM_172579.4"/>
</dbReference>
<dbReference type="RefSeq" id="XP_011242371.1">
    <property type="nucleotide sequence ID" value="XM_011244069.2"/>
</dbReference>
<dbReference type="RefSeq" id="XP_017170514.1">
    <molecule id="Q8C0T5-1"/>
    <property type="nucleotide sequence ID" value="XM_017315025.2"/>
</dbReference>
<dbReference type="SMR" id="Q8C0T5"/>
<dbReference type="BioGRID" id="229945">
    <property type="interactions" value="20"/>
</dbReference>
<dbReference type="FunCoup" id="Q8C0T5">
    <property type="interactions" value="746"/>
</dbReference>
<dbReference type="IntAct" id="Q8C0T5">
    <property type="interactions" value="6"/>
</dbReference>
<dbReference type="MINT" id="Q8C0T5"/>
<dbReference type="STRING" id="10090.ENSMUSP00000131030"/>
<dbReference type="GlyGen" id="Q8C0T5">
    <property type="glycosylation" value="20 sites, 3 N-linked glycans (4 sites), 1 O-linked glycan (13 sites)"/>
</dbReference>
<dbReference type="iPTMnet" id="Q8C0T5"/>
<dbReference type="PhosphoSitePlus" id="Q8C0T5"/>
<dbReference type="SwissPalm" id="Q8C0T5"/>
<dbReference type="jPOST" id="Q8C0T5"/>
<dbReference type="PaxDb" id="10090-ENSMUSP00000061014"/>
<dbReference type="PeptideAtlas" id="Q8C0T5"/>
<dbReference type="ProteomicsDB" id="261033">
    <molecule id="Q8C0T5-1"/>
</dbReference>
<dbReference type="ProteomicsDB" id="261034">
    <molecule id="Q8C0T5-2"/>
</dbReference>
<dbReference type="Pumba" id="Q8C0T5"/>
<dbReference type="Antibodypedia" id="132">
    <property type="antibodies" value="52 antibodies from 25 providers"/>
</dbReference>
<dbReference type="DNASU" id="217692"/>
<dbReference type="Ensembl" id="ENSMUST00000053969.7">
    <molecule id="Q8C0T5-1"/>
    <property type="protein sequence ID" value="ENSMUSP00000061014.7"/>
    <property type="gene ID" value="ENSMUSG00000042700.17"/>
</dbReference>
<dbReference type="Ensembl" id="ENSMUST00000166429.9">
    <molecule id="Q8C0T5-1"/>
    <property type="protein sequence ID" value="ENSMUSP00000131030.3"/>
    <property type="gene ID" value="ENSMUSG00000042700.17"/>
</dbReference>
<dbReference type="Ensembl" id="ENSMUST00000222298.2">
    <molecule id="Q8C0T5-2"/>
    <property type="protein sequence ID" value="ENSMUSP00000152356.2"/>
    <property type="gene ID" value="ENSMUSG00000042700.17"/>
</dbReference>
<dbReference type="Ensembl" id="ENSMUST00000222714.2">
    <molecule id="Q8C0T5-1"/>
    <property type="protein sequence ID" value="ENSMUSP00000152212.2"/>
    <property type="gene ID" value="ENSMUSG00000042700.17"/>
</dbReference>
<dbReference type="GeneID" id="217692"/>
<dbReference type="KEGG" id="mmu:217692"/>
<dbReference type="UCSC" id="uc007ocu.2">
    <molecule id="Q8C0T5-1"/>
    <property type="organism name" value="mouse"/>
</dbReference>
<dbReference type="UCSC" id="uc007ocw.2">
    <molecule id="Q8C0T5-2"/>
    <property type="organism name" value="mouse"/>
</dbReference>
<dbReference type="AGR" id="MGI:2443679"/>
<dbReference type="CTD" id="26037"/>
<dbReference type="MGI" id="MGI:2443679">
    <property type="gene designation" value="Sipa1l1"/>
</dbReference>
<dbReference type="VEuPathDB" id="HostDB:ENSMUSG00000042700"/>
<dbReference type="eggNOG" id="KOG3686">
    <property type="taxonomic scope" value="Eukaryota"/>
</dbReference>
<dbReference type="GeneTree" id="ENSGT00940000155944"/>
<dbReference type="HOGENOM" id="CLU_002127_0_1_1"/>
<dbReference type="InParanoid" id="Q8C0T5"/>
<dbReference type="OMA" id="VWAIRAK"/>
<dbReference type="OrthoDB" id="2499658at2759"/>
<dbReference type="PhylomeDB" id="Q8C0T5"/>
<dbReference type="TreeFam" id="TF318626"/>
<dbReference type="BioGRID-ORCS" id="217692">
    <property type="hits" value="3 hits in 77 CRISPR screens"/>
</dbReference>
<dbReference type="CD-CODE" id="CE726F99">
    <property type="entry name" value="Postsynaptic density"/>
</dbReference>
<dbReference type="ChiTaRS" id="Sipa1l1">
    <property type="organism name" value="mouse"/>
</dbReference>
<dbReference type="PRO" id="PR:Q8C0T5"/>
<dbReference type="Proteomes" id="UP000000589">
    <property type="component" value="Chromosome 12"/>
</dbReference>
<dbReference type="RNAct" id="Q8C0T5">
    <property type="molecule type" value="protein"/>
</dbReference>
<dbReference type="Bgee" id="ENSMUSG00000042700">
    <property type="expression patterns" value="Expressed in olfactory tubercle and 235 other cell types or tissues"/>
</dbReference>
<dbReference type="ExpressionAtlas" id="Q8C0T5">
    <property type="expression patterns" value="baseline and differential"/>
</dbReference>
<dbReference type="GO" id="GO:0015629">
    <property type="term" value="C:actin cytoskeleton"/>
    <property type="evidence" value="ECO:0007669"/>
    <property type="project" value="Ensembl"/>
</dbReference>
<dbReference type="GO" id="GO:0005737">
    <property type="term" value="C:cytoplasm"/>
    <property type="evidence" value="ECO:0007669"/>
    <property type="project" value="UniProtKB-KW"/>
</dbReference>
<dbReference type="GO" id="GO:0043197">
    <property type="term" value="C:dendritic spine"/>
    <property type="evidence" value="ECO:0000250"/>
    <property type="project" value="UniProtKB"/>
</dbReference>
<dbReference type="GO" id="GO:0005886">
    <property type="term" value="C:plasma membrane"/>
    <property type="evidence" value="ECO:0007669"/>
    <property type="project" value="Ensembl"/>
</dbReference>
<dbReference type="GO" id="GO:0014069">
    <property type="term" value="C:postsynaptic density"/>
    <property type="evidence" value="ECO:0000250"/>
    <property type="project" value="UniProtKB"/>
</dbReference>
<dbReference type="GO" id="GO:0046875">
    <property type="term" value="F:ephrin receptor binding"/>
    <property type="evidence" value="ECO:0000353"/>
    <property type="project" value="UniProtKB"/>
</dbReference>
<dbReference type="GO" id="GO:0005096">
    <property type="term" value="F:GTPase activator activity"/>
    <property type="evidence" value="ECO:0007669"/>
    <property type="project" value="UniProtKB-KW"/>
</dbReference>
<dbReference type="GO" id="GO:0030036">
    <property type="term" value="P:actin cytoskeleton organization"/>
    <property type="evidence" value="ECO:0000250"/>
    <property type="project" value="UniProtKB"/>
</dbReference>
<dbReference type="GO" id="GO:0090630">
    <property type="term" value="P:activation of GTPase activity"/>
    <property type="evidence" value="ECO:0000250"/>
    <property type="project" value="UniProtKB"/>
</dbReference>
<dbReference type="GO" id="GO:0048013">
    <property type="term" value="P:ephrin receptor signaling pathway"/>
    <property type="evidence" value="ECO:0000315"/>
    <property type="project" value="UniProtKB"/>
</dbReference>
<dbReference type="GO" id="GO:0050770">
    <property type="term" value="P:regulation of axonogenesis"/>
    <property type="evidence" value="ECO:0000314"/>
    <property type="project" value="UniProtKB"/>
</dbReference>
<dbReference type="GO" id="GO:0061001">
    <property type="term" value="P:regulation of dendritic spine morphogenesis"/>
    <property type="evidence" value="ECO:0000250"/>
    <property type="project" value="UniProtKB"/>
</dbReference>
<dbReference type="GO" id="GO:0043087">
    <property type="term" value="P:regulation of GTPase activity"/>
    <property type="evidence" value="ECO:0000315"/>
    <property type="project" value="UniProtKB"/>
</dbReference>
<dbReference type="GO" id="GO:0051056">
    <property type="term" value="P:regulation of small GTPase mediated signal transduction"/>
    <property type="evidence" value="ECO:0007669"/>
    <property type="project" value="InterPro"/>
</dbReference>
<dbReference type="GO" id="GO:0048167">
    <property type="term" value="P:regulation of synaptic plasticity"/>
    <property type="evidence" value="ECO:0000250"/>
    <property type="project" value="UniProtKB"/>
</dbReference>
<dbReference type="CDD" id="cd06745">
    <property type="entry name" value="PDZ_SIPA1-like"/>
    <property type="match status" value="1"/>
</dbReference>
<dbReference type="FunFam" id="3.40.50.11210:FF:000002">
    <property type="entry name" value="Signal-induced proliferation-associated 1-like protein 1"/>
    <property type="match status" value="1"/>
</dbReference>
<dbReference type="FunFam" id="2.30.42.10:FF:000027">
    <property type="entry name" value="Signal-induced proliferation-associated 1-like protein 1 isoform 2"/>
    <property type="match status" value="1"/>
</dbReference>
<dbReference type="Gene3D" id="2.30.42.10">
    <property type="match status" value="1"/>
</dbReference>
<dbReference type="Gene3D" id="6.10.140.210">
    <property type="match status" value="1"/>
</dbReference>
<dbReference type="Gene3D" id="3.40.50.11210">
    <property type="entry name" value="Rap/Ran-GAP"/>
    <property type="match status" value="1"/>
</dbReference>
<dbReference type="InterPro" id="IPR001478">
    <property type="entry name" value="PDZ"/>
</dbReference>
<dbReference type="InterPro" id="IPR036034">
    <property type="entry name" value="PDZ_sf"/>
</dbReference>
<dbReference type="InterPro" id="IPR035974">
    <property type="entry name" value="Rap/Ran-GAP_sf"/>
</dbReference>
<dbReference type="InterPro" id="IPR000331">
    <property type="entry name" value="Rap/Ran_GAP_dom"/>
</dbReference>
<dbReference type="InterPro" id="IPR050989">
    <property type="entry name" value="Rap1_Ran_GAP"/>
</dbReference>
<dbReference type="InterPro" id="IPR021818">
    <property type="entry name" value="SIPA1L_C"/>
</dbReference>
<dbReference type="PANTHER" id="PTHR15711">
    <property type="entry name" value="RAP GTPASE-ACTIVATING PROTEIN"/>
    <property type="match status" value="1"/>
</dbReference>
<dbReference type="PANTHER" id="PTHR15711:SF10">
    <property type="entry name" value="SIGNAL-INDUCED PROLIFERATION-ASSOCIATED 1-LIKE PROTEIN 1"/>
    <property type="match status" value="1"/>
</dbReference>
<dbReference type="Pfam" id="PF00595">
    <property type="entry name" value="PDZ"/>
    <property type="match status" value="1"/>
</dbReference>
<dbReference type="Pfam" id="PF21022">
    <property type="entry name" value="Rap-GAP_dimer"/>
    <property type="match status" value="1"/>
</dbReference>
<dbReference type="Pfam" id="PF02145">
    <property type="entry name" value="Rap_GAP"/>
    <property type="match status" value="1"/>
</dbReference>
<dbReference type="Pfam" id="PF11881">
    <property type="entry name" value="SPAR_C"/>
    <property type="match status" value="1"/>
</dbReference>
<dbReference type="SMART" id="SM00228">
    <property type="entry name" value="PDZ"/>
    <property type="match status" value="1"/>
</dbReference>
<dbReference type="SUPFAM" id="SSF50156">
    <property type="entry name" value="PDZ domain-like"/>
    <property type="match status" value="1"/>
</dbReference>
<dbReference type="SUPFAM" id="SSF111347">
    <property type="entry name" value="Rap/Ran-GAP"/>
    <property type="match status" value="1"/>
</dbReference>
<dbReference type="PROSITE" id="PS50106">
    <property type="entry name" value="PDZ"/>
    <property type="match status" value="1"/>
</dbReference>
<dbReference type="PROSITE" id="PS50085">
    <property type="entry name" value="RAPGAP"/>
    <property type="match status" value="1"/>
</dbReference>
<proteinExistence type="evidence at protein level"/>
<keyword id="KW-0025">Alternative splicing</keyword>
<keyword id="KW-0175">Coiled coil</keyword>
<keyword id="KW-0963">Cytoplasm</keyword>
<keyword id="KW-0206">Cytoskeleton</keyword>
<keyword id="KW-0903">Direct protein sequencing</keyword>
<keyword id="KW-0343">GTPase activation</keyword>
<keyword id="KW-0488">Methylation</keyword>
<keyword id="KW-0597">Phosphoprotein</keyword>
<keyword id="KW-1185">Reference proteome</keyword>
<keyword id="KW-0770">Synapse</keyword>
<keyword id="KW-0771">Synaptosome</keyword>
<keyword id="KW-0832">Ubl conjugation</keyword>